<feature type="chain" id="PRO_1000089356" description="Adenylosuccinate synthetase">
    <location>
        <begin position="1"/>
        <end position="432"/>
    </location>
</feature>
<feature type="active site" description="Proton acceptor" evidence="1">
    <location>
        <position position="14"/>
    </location>
</feature>
<feature type="active site" description="Proton donor" evidence="1">
    <location>
        <position position="42"/>
    </location>
</feature>
<feature type="binding site" evidence="1">
    <location>
        <begin position="13"/>
        <end position="19"/>
    </location>
    <ligand>
        <name>GTP</name>
        <dbReference type="ChEBI" id="CHEBI:37565"/>
    </ligand>
</feature>
<feature type="binding site" description="in other chain" evidence="1">
    <location>
        <begin position="14"/>
        <end position="17"/>
    </location>
    <ligand>
        <name>IMP</name>
        <dbReference type="ChEBI" id="CHEBI:58053"/>
        <note>ligand shared between dimeric partners</note>
    </ligand>
</feature>
<feature type="binding site" evidence="1">
    <location>
        <position position="14"/>
    </location>
    <ligand>
        <name>Mg(2+)</name>
        <dbReference type="ChEBI" id="CHEBI:18420"/>
    </ligand>
</feature>
<feature type="binding site" description="in other chain" evidence="1">
    <location>
        <begin position="39"/>
        <end position="42"/>
    </location>
    <ligand>
        <name>IMP</name>
        <dbReference type="ChEBI" id="CHEBI:58053"/>
        <note>ligand shared between dimeric partners</note>
    </ligand>
</feature>
<feature type="binding site" evidence="1">
    <location>
        <begin position="41"/>
        <end position="43"/>
    </location>
    <ligand>
        <name>GTP</name>
        <dbReference type="ChEBI" id="CHEBI:37565"/>
    </ligand>
</feature>
<feature type="binding site" evidence="1">
    <location>
        <position position="41"/>
    </location>
    <ligand>
        <name>Mg(2+)</name>
        <dbReference type="ChEBI" id="CHEBI:18420"/>
    </ligand>
</feature>
<feature type="binding site" description="in other chain" evidence="1">
    <location>
        <position position="130"/>
    </location>
    <ligand>
        <name>IMP</name>
        <dbReference type="ChEBI" id="CHEBI:58053"/>
        <note>ligand shared between dimeric partners</note>
    </ligand>
</feature>
<feature type="binding site" evidence="1">
    <location>
        <position position="144"/>
    </location>
    <ligand>
        <name>IMP</name>
        <dbReference type="ChEBI" id="CHEBI:58053"/>
        <note>ligand shared between dimeric partners</note>
    </ligand>
</feature>
<feature type="binding site" description="in other chain" evidence="1">
    <location>
        <position position="225"/>
    </location>
    <ligand>
        <name>IMP</name>
        <dbReference type="ChEBI" id="CHEBI:58053"/>
        <note>ligand shared between dimeric partners</note>
    </ligand>
</feature>
<feature type="binding site" description="in other chain" evidence="1">
    <location>
        <position position="240"/>
    </location>
    <ligand>
        <name>IMP</name>
        <dbReference type="ChEBI" id="CHEBI:58053"/>
        <note>ligand shared between dimeric partners</note>
    </ligand>
</feature>
<feature type="binding site" evidence="1">
    <location>
        <begin position="300"/>
        <end position="306"/>
    </location>
    <ligand>
        <name>substrate</name>
    </ligand>
</feature>
<feature type="binding site" description="in other chain" evidence="1">
    <location>
        <position position="304"/>
    </location>
    <ligand>
        <name>IMP</name>
        <dbReference type="ChEBI" id="CHEBI:58053"/>
        <note>ligand shared between dimeric partners</note>
    </ligand>
</feature>
<feature type="binding site" evidence="1">
    <location>
        <position position="306"/>
    </location>
    <ligand>
        <name>GTP</name>
        <dbReference type="ChEBI" id="CHEBI:37565"/>
    </ligand>
</feature>
<feature type="binding site" evidence="1">
    <location>
        <begin position="332"/>
        <end position="334"/>
    </location>
    <ligand>
        <name>GTP</name>
        <dbReference type="ChEBI" id="CHEBI:37565"/>
    </ligand>
</feature>
<feature type="binding site" evidence="1">
    <location>
        <begin position="415"/>
        <end position="417"/>
    </location>
    <ligand>
        <name>GTP</name>
        <dbReference type="ChEBI" id="CHEBI:37565"/>
    </ligand>
</feature>
<name>PURA_YERPB</name>
<proteinExistence type="inferred from homology"/>
<keyword id="KW-0963">Cytoplasm</keyword>
<keyword id="KW-0342">GTP-binding</keyword>
<keyword id="KW-0436">Ligase</keyword>
<keyword id="KW-0460">Magnesium</keyword>
<keyword id="KW-0479">Metal-binding</keyword>
<keyword id="KW-0547">Nucleotide-binding</keyword>
<keyword id="KW-0658">Purine biosynthesis</keyword>
<protein>
    <recommendedName>
        <fullName evidence="1">Adenylosuccinate synthetase</fullName>
        <shortName evidence="1">AMPSase</shortName>
        <shortName evidence="1">AdSS</shortName>
        <ecNumber evidence="1">6.3.4.4</ecNumber>
    </recommendedName>
    <alternativeName>
        <fullName evidence="1">IMP--aspartate ligase</fullName>
    </alternativeName>
</protein>
<gene>
    <name evidence="1" type="primary">purA</name>
    <name type="ordered locus">YPTS_0459</name>
</gene>
<comment type="function">
    <text evidence="1">Plays an important role in the de novo pathway of purine nucleotide biosynthesis. Catalyzes the first committed step in the biosynthesis of AMP from IMP.</text>
</comment>
<comment type="catalytic activity">
    <reaction evidence="1">
        <text>IMP + L-aspartate + GTP = N(6)-(1,2-dicarboxyethyl)-AMP + GDP + phosphate + 2 H(+)</text>
        <dbReference type="Rhea" id="RHEA:15753"/>
        <dbReference type="ChEBI" id="CHEBI:15378"/>
        <dbReference type="ChEBI" id="CHEBI:29991"/>
        <dbReference type="ChEBI" id="CHEBI:37565"/>
        <dbReference type="ChEBI" id="CHEBI:43474"/>
        <dbReference type="ChEBI" id="CHEBI:57567"/>
        <dbReference type="ChEBI" id="CHEBI:58053"/>
        <dbReference type="ChEBI" id="CHEBI:58189"/>
        <dbReference type="EC" id="6.3.4.4"/>
    </reaction>
</comment>
<comment type="cofactor">
    <cofactor evidence="1">
        <name>Mg(2+)</name>
        <dbReference type="ChEBI" id="CHEBI:18420"/>
    </cofactor>
    <text evidence="1">Binds 1 Mg(2+) ion per subunit.</text>
</comment>
<comment type="pathway">
    <text evidence="1">Purine metabolism; AMP biosynthesis via de novo pathway; AMP from IMP: step 1/2.</text>
</comment>
<comment type="subunit">
    <text evidence="1">Homodimer.</text>
</comment>
<comment type="subcellular location">
    <subcellularLocation>
        <location evidence="1">Cytoplasm</location>
    </subcellularLocation>
</comment>
<comment type="similarity">
    <text evidence="1">Belongs to the adenylosuccinate synthetase family.</text>
</comment>
<organism>
    <name type="scientific">Yersinia pseudotuberculosis serotype IB (strain PB1/+)</name>
    <dbReference type="NCBI Taxonomy" id="502801"/>
    <lineage>
        <taxon>Bacteria</taxon>
        <taxon>Pseudomonadati</taxon>
        <taxon>Pseudomonadota</taxon>
        <taxon>Gammaproteobacteria</taxon>
        <taxon>Enterobacterales</taxon>
        <taxon>Yersiniaceae</taxon>
        <taxon>Yersinia</taxon>
    </lineage>
</organism>
<reference key="1">
    <citation type="submission" date="2008-04" db="EMBL/GenBank/DDBJ databases">
        <title>Complete sequence of Yersinia pseudotuberculosis PB1/+.</title>
        <authorList>
            <person name="Copeland A."/>
            <person name="Lucas S."/>
            <person name="Lapidus A."/>
            <person name="Glavina del Rio T."/>
            <person name="Dalin E."/>
            <person name="Tice H."/>
            <person name="Bruce D."/>
            <person name="Goodwin L."/>
            <person name="Pitluck S."/>
            <person name="Munk A.C."/>
            <person name="Brettin T."/>
            <person name="Detter J.C."/>
            <person name="Han C."/>
            <person name="Tapia R."/>
            <person name="Schmutz J."/>
            <person name="Larimer F."/>
            <person name="Land M."/>
            <person name="Hauser L."/>
            <person name="Challacombe J.F."/>
            <person name="Green L."/>
            <person name="Lindler L.E."/>
            <person name="Nikolich M.P."/>
            <person name="Richardson P."/>
        </authorList>
    </citation>
    <scope>NUCLEOTIDE SEQUENCE [LARGE SCALE GENOMIC DNA]</scope>
    <source>
        <strain>PB1/+</strain>
    </source>
</reference>
<dbReference type="EC" id="6.3.4.4" evidence="1"/>
<dbReference type="EMBL" id="CP001048">
    <property type="protein sequence ID" value="ACC87445.1"/>
    <property type="molecule type" value="Genomic_DNA"/>
</dbReference>
<dbReference type="RefSeq" id="WP_002209157.1">
    <property type="nucleotide sequence ID" value="NZ_CP009780.1"/>
</dbReference>
<dbReference type="SMR" id="B2K2K4"/>
<dbReference type="KEGG" id="ypb:YPTS_0459"/>
<dbReference type="PATRIC" id="fig|502801.10.peg.4133"/>
<dbReference type="UniPathway" id="UPA00075">
    <property type="reaction ID" value="UER00335"/>
</dbReference>
<dbReference type="GO" id="GO:0005737">
    <property type="term" value="C:cytoplasm"/>
    <property type="evidence" value="ECO:0007669"/>
    <property type="project" value="UniProtKB-SubCell"/>
</dbReference>
<dbReference type="GO" id="GO:0004019">
    <property type="term" value="F:adenylosuccinate synthase activity"/>
    <property type="evidence" value="ECO:0007669"/>
    <property type="project" value="UniProtKB-UniRule"/>
</dbReference>
<dbReference type="GO" id="GO:0005525">
    <property type="term" value="F:GTP binding"/>
    <property type="evidence" value="ECO:0007669"/>
    <property type="project" value="UniProtKB-UniRule"/>
</dbReference>
<dbReference type="GO" id="GO:0000287">
    <property type="term" value="F:magnesium ion binding"/>
    <property type="evidence" value="ECO:0007669"/>
    <property type="project" value="UniProtKB-UniRule"/>
</dbReference>
<dbReference type="GO" id="GO:0044208">
    <property type="term" value="P:'de novo' AMP biosynthetic process"/>
    <property type="evidence" value="ECO:0007669"/>
    <property type="project" value="UniProtKB-UniRule"/>
</dbReference>
<dbReference type="GO" id="GO:0046040">
    <property type="term" value="P:IMP metabolic process"/>
    <property type="evidence" value="ECO:0007669"/>
    <property type="project" value="TreeGrafter"/>
</dbReference>
<dbReference type="CDD" id="cd03108">
    <property type="entry name" value="AdSS"/>
    <property type="match status" value="1"/>
</dbReference>
<dbReference type="FunFam" id="1.10.300.10:FF:000001">
    <property type="entry name" value="Adenylosuccinate synthetase"/>
    <property type="match status" value="1"/>
</dbReference>
<dbReference type="FunFam" id="3.90.170.10:FF:000001">
    <property type="entry name" value="Adenylosuccinate synthetase"/>
    <property type="match status" value="1"/>
</dbReference>
<dbReference type="Gene3D" id="3.40.440.10">
    <property type="entry name" value="Adenylosuccinate Synthetase, subunit A, domain 1"/>
    <property type="match status" value="1"/>
</dbReference>
<dbReference type="Gene3D" id="1.10.300.10">
    <property type="entry name" value="Adenylosuccinate Synthetase, subunit A, domain 2"/>
    <property type="match status" value="1"/>
</dbReference>
<dbReference type="Gene3D" id="3.90.170.10">
    <property type="entry name" value="Adenylosuccinate Synthetase, subunit A, domain 3"/>
    <property type="match status" value="1"/>
</dbReference>
<dbReference type="HAMAP" id="MF_00011">
    <property type="entry name" value="Adenylosucc_synth"/>
    <property type="match status" value="1"/>
</dbReference>
<dbReference type="InterPro" id="IPR018220">
    <property type="entry name" value="Adenylosuccin_syn_GTP-bd"/>
</dbReference>
<dbReference type="InterPro" id="IPR033128">
    <property type="entry name" value="Adenylosuccin_syn_Lys_AS"/>
</dbReference>
<dbReference type="InterPro" id="IPR042109">
    <property type="entry name" value="Adenylosuccinate_synth_dom1"/>
</dbReference>
<dbReference type="InterPro" id="IPR042110">
    <property type="entry name" value="Adenylosuccinate_synth_dom2"/>
</dbReference>
<dbReference type="InterPro" id="IPR042111">
    <property type="entry name" value="Adenylosuccinate_synth_dom3"/>
</dbReference>
<dbReference type="InterPro" id="IPR001114">
    <property type="entry name" value="Adenylosuccinate_synthetase"/>
</dbReference>
<dbReference type="InterPro" id="IPR027417">
    <property type="entry name" value="P-loop_NTPase"/>
</dbReference>
<dbReference type="NCBIfam" id="NF002223">
    <property type="entry name" value="PRK01117.1"/>
    <property type="match status" value="1"/>
</dbReference>
<dbReference type="NCBIfam" id="TIGR00184">
    <property type="entry name" value="purA"/>
    <property type="match status" value="1"/>
</dbReference>
<dbReference type="PANTHER" id="PTHR11846">
    <property type="entry name" value="ADENYLOSUCCINATE SYNTHETASE"/>
    <property type="match status" value="1"/>
</dbReference>
<dbReference type="PANTHER" id="PTHR11846:SF0">
    <property type="entry name" value="ADENYLOSUCCINATE SYNTHETASE"/>
    <property type="match status" value="1"/>
</dbReference>
<dbReference type="Pfam" id="PF00709">
    <property type="entry name" value="Adenylsucc_synt"/>
    <property type="match status" value="1"/>
</dbReference>
<dbReference type="SMART" id="SM00788">
    <property type="entry name" value="Adenylsucc_synt"/>
    <property type="match status" value="1"/>
</dbReference>
<dbReference type="SUPFAM" id="SSF52540">
    <property type="entry name" value="P-loop containing nucleoside triphosphate hydrolases"/>
    <property type="match status" value="1"/>
</dbReference>
<dbReference type="PROSITE" id="PS01266">
    <property type="entry name" value="ADENYLOSUCCIN_SYN_1"/>
    <property type="match status" value="1"/>
</dbReference>
<dbReference type="PROSITE" id="PS00513">
    <property type="entry name" value="ADENYLOSUCCIN_SYN_2"/>
    <property type="match status" value="1"/>
</dbReference>
<sequence>MGKNVVVLGTQWGDEGKGKVVDLLTERAKYVVRYQGGHNAGHTLVINGEKTVLHLIPSGILRENVISIIGNGVVLAPDALMKEMTELEARGVPVRERLLLSEACPLILPYHVALDNAREKARGAKAIGTTGRGIGPAYEDKVARRGLRVSDLFNKETFAIKLKEIVEYHNFQLVHYYKEAAVDYQKVLDDVLAIADILTAMVVDVSELLDNARKQGELIMFEGAQGTLLDIDHGTYPYVTSSNTTAGGVATGSGLGPRYVDYVLGIVKAYSTRVGAGPFPTELNDETGEFLRKQGNEYGATTGRSRRTGWLDIVAVRRAVQINSLSGFCMTKLDVLDGLKEVKLCVGYRMPDGREVDTTPLAAEGWEGIEPIYETMPGWSETTFGVKEHSKLPQAALNYIQRVEELTGVPIDIISTGPDRDETMILRDPFDA</sequence>
<accession>B2K2K4</accession>
<evidence type="ECO:0000255" key="1">
    <source>
        <dbReference type="HAMAP-Rule" id="MF_00011"/>
    </source>
</evidence>